<organism>
    <name type="scientific">Vibrio parahaemolyticus serotype O3:K6 (strain RIMD 2210633)</name>
    <dbReference type="NCBI Taxonomy" id="223926"/>
    <lineage>
        <taxon>Bacteria</taxon>
        <taxon>Pseudomonadati</taxon>
        <taxon>Pseudomonadota</taxon>
        <taxon>Gammaproteobacteria</taxon>
        <taxon>Vibrionales</taxon>
        <taxon>Vibrionaceae</taxon>
        <taxon>Vibrio</taxon>
    </lineage>
</organism>
<gene>
    <name evidence="1" type="primary">msrB</name>
    <name type="ordered locus">VP2156</name>
</gene>
<evidence type="ECO:0000255" key="1">
    <source>
        <dbReference type="HAMAP-Rule" id="MF_01400"/>
    </source>
</evidence>
<evidence type="ECO:0000255" key="2">
    <source>
        <dbReference type="PROSITE-ProRule" id="PRU01126"/>
    </source>
</evidence>
<evidence type="ECO:0000256" key="3">
    <source>
        <dbReference type="SAM" id="MobiDB-lite"/>
    </source>
</evidence>
<dbReference type="EC" id="1.8.4.12" evidence="1"/>
<dbReference type="EMBL" id="BA000031">
    <property type="protein sequence ID" value="BAC60419.1"/>
    <property type="molecule type" value="Genomic_DNA"/>
</dbReference>
<dbReference type="RefSeq" id="NP_798535.1">
    <property type="nucleotide sequence ID" value="NC_004603.1"/>
</dbReference>
<dbReference type="RefSeq" id="WP_011106032.1">
    <property type="nucleotide sequence ID" value="NC_004603.1"/>
</dbReference>
<dbReference type="SMR" id="Q87MS5"/>
<dbReference type="GeneID" id="1189669"/>
<dbReference type="KEGG" id="vpa:VP2156"/>
<dbReference type="PATRIC" id="fig|223926.6.peg.2060"/>
<dbReference type="eggNOG" id="COG0229">
    <property type="taxonomic scope" value="Bacteria"/>
</dbReference>
<dbReference type="HOGENOM" id="CLU_031040_8_5_6"/>
<dbReference type="Proteomes" id="UP000002493">
    <property type="component" value="Chromosome 1"/>
</dbReference>
<dbReference type="GO" id="GO:0005737">
    <property type="term" value="C:cytoplasm"/>
    <property type="evidence" value="ECO:0007669"/>
    <property type="project" value="TreeGrafter"/>
</dbReference>
<dbReference type="GO" id="GO:0033743">
    <property type="term" value="F:peptide-methionine (R)-S-oxide reductase activity"/>
    <property type="evidence" value="ECO:0007669"/>
    <property type="project" value="UniProtKB-UniRule"/>
</dbReference>
<dbReference type="GO" id="GO:0008270">
    <property type="term" value="F:zinc ion binding"/>
    <property type="evidence" value="ECO:0007669"/>
    <property type="project" value="UniProtKB-UniRule"/>
</dbReference>
<dbReference type="GO" id="GO:0030091">
    <property type="term" value="P:protein repair"/>
    <property type="evidence" value="ECO:0007669"/>
    <property type="project" value="InterPro"/>
</dbReference>
<dbReference type="GO" id="GO:0006979">
    <property type="term" value="P:response to oxidative stress"/>
    <property type="evidence" value="ECO:0007669"/>
    <property type="project" value="InterPro"/>
</dbReference>
<dbReference type="FunFam" id="2.170.150.20:FF:000001">
    <property type="entry name" value="Peptide methionine sulfoxide reductase MsrB"/>
    <property type="match status" value="1"/>
</dbReference>
<dbReference type="Gene3D" id="2.170.150.20">
    <property type="entry name" value="Peptide methionine sulfoxide reductase"/>
    <property type="match status" value="1"/>
</dbReference>
<dbReference type="HAMAP" id="MF_01400">
    <property type="entry name" value="MsrB"/>
    <property type="match status" value="1"/>
</dbReference>
<dbReference type="InterPro" id="IPR028427">
    <property type="entry name" value="Met_Sox_Rdtase_MsrB"/>
</dbReference>
<dbReference type="InterPro" id="IPR002579">
    <property type="entry name" value="Met_Sox_Rdtase_MsrB_dom"/>
</dbReference>
<dbReference type="InterPro" id="IPR011057">
    <property type="entry name" value="Mss4-like_sf"/>
</dbReference>
<dbReference type="NCBIfam" id="TIGR00357">
    <property type="entry name" value="peptide-methionine (R)-S-oxide reductase MsrB"/>
    <property type="match status" value="1"/>
</dbReference>
<dbReference type="PANTHER" id="PTHR10173">
    <property type="entry name" value="METHIONINE SULFOXIDE REDUCTASE"/>
    <property type="match status" value="1"/>
</dbReference>
<dbReference type="PANTHER" id="PTHR10173:SF52">
    <property type="entry name" value="METHIONINE-R-SULFOXIDE REDUCTASE B1"/>
    <property type="match status" value="1"/>
</dbReference>
<dbReference type="Pfam" id="PF01641">
    <property type="entry name" value="SelR"/>
    <property type="match status" value="1"/>
</dbReference>
<dbReference type="SUPFAM" id="SSF51316">
    <property type="entry name" value="Mss4-like"/>
    <property type="match status" value="1"/>
</dbReference>
<dbReference type="PROSITE" id="PS51790">
    <property type="entry name" value="MSRB"/>
    <property type="match status" value="1"/>
</dbReference>
<reference key="1">
    <citation type="journal article" date="2003" name="Lancet">
        <title>Genome sequence of Vibrio parahaemolyticus: a pathogenic mechanism distinct from that of V. cholerae.</title>
        <authorList>
            <person name="Makino K."/>
            <person name="Oshima K."/>
            <person name="Kurokawa K."/>
            <person name="Yokoyama K."/>
            <person name="Uda T."/>
            <person name="Tagomori K."/>
            <person name="Iijima Y."/>
            <person name="Najima M."/>
            <person name="Nakano M."/>
            <person name="Yamashita A."/>
            <person name="Kubota Y."/>
            <person name="Kimura S."/>
            <person name="Yasunaga T."/>
            <person name="Honda T."/>
            <person name="Shinagawa H."/>
            <person name="Hattori M."/>
            <person name="Iida T."/>
        </authorList>
    </citation>
    <scope>NUCLEOTIDE SEQUENCE [LARGE SCALE GENOMIC DNA]</scope>
    <source>
        <strain>RIMD 2210633</strain>
    </source>
</reference>
<feature type="chain" id="PRO_0000140313" description="Peptide methionine sulfoxide reductase MsrB">
    <location>
        <begin position="1"/>
        <end position="147"/>
    </location>
</feature>
<feature type="domain" description="MsrB" evidence="2">
    <location>
        <begin position="23"/>
        <end position="145"/>
    </location>
</feature>
<feature type="region of interest" description="Disordered" evidence="3">
    <location>
        <begin position="1"/>
        <end position="25"/>
    </location>
</feature>
<feature type="compositionally biased region" description="Basic and acidic residues" evidence="3">
    <location>
        <begin position="1"/>
        <end position="11"/>
    </location>
</feature>
<feature type="active site" description="Nucleophile" evidence="2">
    <location>
        <position position="134"/>
    </location>
</feature>
<feature type="binding site" evidence="2">
    <location>
        <position position="62"/>
    </location>
    <ligand>
        <name>Zn(2+)</name>
        <dbReference type="ChEBI" id="CHEBI:29105"/>
    </ligand>
</feature>
<feature type="binding site" evidence="2">
    <location>
        <position position="65"/>
    </location>
    <ligand>
        <name>Zn(2+)</name>
        <dbReference type="ChEBI" id="CHEBI:29105"/>
    </ligand>
</feature>
<feature type="binding site" evidence="2">
    <location>
        <position position="111"/>
    </location>
    <ligand>
        <name>Zn(2+)</name>
        <dbReference type="ChEBI" id="CHEBI:29105"/>
    </ligand>
</feature>
<feature type="binding site" evidence="2">
    <location>
        <position position="114"/>
    </location>
    <ligand>
        <name>Zn(2+)</name>
        <dbReference type="ChEBI" id="CHEBI:29105"/>
    </ligand>
</feature>
<comment type="catalytic activity">
    <reaction evidence="1">
        <text>L-methionyl-[protein] + [thioredoxin]-disulfide + H2O = L-methionyl-(R)-S-oxide-[protein] + [thioredoxin]-dithiol</text>
        <dbReference type="Rhea" id="RHEA:24164"/>
        <dbReference type="Rhea" id="RHEA-COMP:10698"/>
        <dbReference type="Rhea" id="RHEA-COMP:10700"/>
        <dbReference type="Rhea" id="RHEA-COMP:12313"/>
        <dbReference type="Rhea" id="RHEA-COMP:12314"/>
        <dbReference type="ChEBI" id="CHEBI:15377"/>
        <dbReference type="ChEBI" id="CHEBI:16044"/>
        <dbReference type="ChEBI" id="CHEBI:29950"/>
        <dbReference type="ChEBI" id="CHEBI:45764"/>
        <dbReference type="ChEBI" id="CHEBI:50058"/>
        <dbReference type="EC" id="1.8.4.12"/>
    </reaction>
</comment>
<comment type="cofactor">
    <cofactor evidence="1">
        <name>Zn(2+)</name>
        <dbReference type="ChEBI" id="CHEBI:29105"/>
    </cofactor>
    <text evidence="1">Binds 1 zinc ion per subunit. The zinc ion is important for the structural integrity of the protein.</text>
</comment>
<comment type="similarity">
    <text evidence="1">Belongs to the MsrB Met sulfoxide reductase family.</text>
</comment>
<sequence length="147" mass="16644">MPKIVKKEPKFVEQSGKKVTKSDEQWREQLSDEEFRVCREQGTEPPFSGKLLHNKETGVYACTCCNAPLFISDNKYDSGCGWPSFDAPLNNEAIRYLEDLSHGMVRTEIRCASCDSHLGHVFEDGPKTTGERYCVNSVSLIFNKSDE</sequence>
<proteinExistence type="inferred from homology"/>
<name>MSRB_VIBPA</name>
<keyword id="KW-0479">Metal-binding</keyword>
<keyword id="KW-0560">Oxidoreductase</keyword>
<keyword id="KW-0862">Zinc</keyword>
<accession>Q87MS5</accession>
<protein>
    <recommendedName>
        <fullName evidence="1">Peptide methionine sulfoxide reductase MsrB</fullName>
        <ecNumber evidence="1">1.8.4.12</ecNumber>
    </recommendedName>
    <alternativeName>
        <fullName evidence="1">Peptide-methionine (R)-S-oxide reductase</fullName>
    </alternativeName>
</protein>